<accession>P12065</accession>
<feature type="chain" id="PRO_0000208841" description="Alpha-lactalbumin">
    <location>
        <begin position="1"/>
        <end position="123"/>
    </location>
</feature>
<feature type="domain" description="C-type lysozyme" evidence="3">
    <location>
        <begin position="1"/>
        <end position="123"/>
    </location>
</feature>
<feature type="binding site" evidence="1">
    <location>
        <position position="79"/>
    </location>
    <ligand>
        <name>Ca(2+)</name>
        <dbReference type="ChEBI" id="CHEBI:29108"/>
    </ligand>
</feature>
<feature type="binding site" evidence="1">
    <location>
        <position position="82"/>
    </location>
    <ligand>
        <name>Ca(2+)</name>
        <dbReference type="ChEBI" id="CHEBI:29108"/>
    </ligand>
</feature>
<feature type="binding site" evidence="1">
    <location>
        <position position="84"/>
    </location>
    <ligand>
        <name>Ca(2+)</name>
        <dbReference type="ChEBI" id="CHEBI:29108"/>
    </ligand>
</feature>
<feature type="binding site" evidence="1">
    <location>
        <position position="87"/>
    </location>
    <ligand>
        <name>Ca(2+)</name>
        <dbReference type="ChEBI" id="CHEBI:29108"/>
    </ligand>
</feature>
<feature type="binding site" evidence="1">
    <location>
        <position position="88"/>
    </location>
    <ligand>
        <name>Ca(2+)</name>
        <dbReference type="ChEBI" id="CHEBI:29108"/>
    </ligand>
</feature>
<feature type="glycosylation site" description="N-linked (GlcNAc...) asparagine" evidence="2">
    <location>
        <position position="45"/>
    </location>
</feature>
<feature type="disulfide bond" evidence="3 4">
    <location>
        <begin position="6"/>
        <end position="120"/>
    </location>
</feature>
<feature type="disulfide bond" evidence="3 4">
    <location>
        <begin position="28"/>
        <end position="111"/>
    </location>
</feature>
<feature type="disulfide bond" evidence="3 4">
    <location>
        <begin position="61"/>
        <end position="77"/>
    </location>
</feature>
<feature type="disulfide bond" evidence="3 4">
    <location>
        <begin position="73"/>
        <end position="91"/>
    </location>
</feature>
<feature type="helix" evidence="6">
    <location>
        <begin position="5"/>
        <end position="11"/>
    </location>
</feature>
<feature type="helix" evidence="6">
    <location>
        <begin position="13"/>
        <end position="15"/>
    </location>
</feature>
<feature type="helix" evidence="6">
    <location>
        <begin position="18"/>
        <end position="20"/>
    </location>
</feature>
<feature type="helix" evidence="6">
    <location>
        <begin position="23"/>
        <end position="34"/>
    </location>
</feature>
<feature type="strand" evidence="6">
    <location>
        <begin position="41"/>
        <end position="43"/>
    </location>
</feature>
<feature type="strand" evidence="6">
    <location>
        <begin position="48"/>
        <end position="50"/>
    </location>
</feature>
<feature type="turn" evidence="6">
    <location>
        <begin position="51"/>
        <end position="54"/>
    </location>
</feature>
<feature type="turn" evidence="6">
    <location>
        <begin position="57"/>
        <end position="60"/>
    </location>
</feature>
<feature type="helix" evidence="6">
    <location>
        <begin position="77"/>
        <end position="81"/>
    </location>
</feature>
<feature type="helix" evidence="6">
    <location>
        <begin position="86"/>
        <end position="98"/>
    </location>
</feature>
<feature type="helix" evidence="6">
    <location>
        <begin position="101"/>
        <end position="103"/>
    </location>
</feature>
<feature type="helix" evidence="6">
    <location>
        <begin position="106"/>
        <end position="110"/>
    </location>
</feature>
<feature type="strand" evidence="6">
    <location>
        <begin position="111"/>
        <end position="113"/>
    </location>
</feature>
<feature type="helix" evidence="6">
    <location>
        <begin position="116"/>
        <end position="118"/>
    </location>
</feature>
<keyword id="KW-0002">3D-structure</keyword>
<keyword id="KW-0106">Calcium</keyword>
<keyword id="KW-1015">Disulfide bond</keyword>
<keyword id="KW-0325">Glycoprotein</keyword>
<keyword id="KW-0422">Lactose biosynthesis</keyword>
<keyword id="KW-0479">Metal-binding</keyword>
<keyword id="KW-0494">Milk protein</keyword>
<keyword id="KW-0964">Secreted</keyword>
<organism>
    <name type="scientific">Papio cynocephalus</name>
    <name type="common">Yellow baboon</name>
    <dbReference type="NCBI Taxonomy" id="9556"/>
    <lineage>
        <taxon>Eukaryota</taxon>
        <taxon>Metazoa</taxon>
        <taxon>Chordata</taxon>
        <taxon>Craniata</taxon>
        <taxon>Vertebrata</taxon>
        <taxon>Euteleostomi</taxon>
        <taxon>Mammalia</taxon>
        <taxon>Eutheria</taxon>
        <taxon>Euarchontoglires</taxon>
        <taxon>Primates</taxon>
        <taxon>Haplorrhini</taxon>
        <taxon>Catarrhini</taxon>
        <taxon>Cercopithecidae</taxon>
        <taxon>Cercopithecinae</taxon>
        <taxon>Papio</taxon>
    </lineage>
</organism>
<protein>
    <recommendedName>
        <fullName>Alpha-lactalbumin</fullName>
    </recommendedName>
    <alternativeName>
        <fullName>Lactose synthase B protein</fullName>
    </alternativeName>
</protein>
<dbReference type="PIR" id="A58671">
    <property type="entry name" value="A58671"/>
</dbReference>
<dbReference type="PDB" id="1ALC">
    <property type="method" value="X-ray"/>
    <property type="resolution" value="1.70 A"/>
    <property type="chains" value="A=1-123"/>
</dbReference>
<dbReference type="PDBsum" id="1ALC"/>
<dbReference type="SMR" id="P12065"/>
<dbReference type="GlyCosmos" id="P12065">
    <property type="glycosylation" value="1 site, No reported glycans"/>
</dbReference>
<dbReference type="EvolutionaryTrace" id="P12065"/>
<dbReference type="GO" id="GO:0005576">
    <property type="term" value="C:extracellular region"/>
    <property type="evidence" value="ECO:0007669"/>
    <property type="project" value="UniProtKB-SubCell"/>
</dbReference>
<dbReference type="GO" id="GO:0005509">
    <property type="term" value="F:calcium ion binding"/>
    <property type="evidence" value="ECO:0007669"/>
    <property type="project" value="InterPro"/>
</dbReference>
<dbReference type="GO" id="GO:0004461">
    <property type="term" value="F:lactose synthase activity"/>
    <property type="evidence" value="ECO:0007669"/>
    <property type="project" value="InterPro"/>
</dbReference>
<dbReference type="GO" id="GO:0003796">
    <property type="term" value="F:lysozyme activity"/>
    <property type="evidence" value="ECO:0007669"/>
    <property type="project" value="TreeGrafter"/>
</dbReference>
<dbReference type="GO" id="GO:0050829">
    <property type="term" value="P:defense response to Gram-negative bacterium"/>
    <property type="evidence" value="ECO:0007669"/>
    <property type="project" value="TreeGrafter"/>
</dbReference>
<dbReference type="GO" id="GO:0050830">
    <property type="term" value="P:defense response to Gram-positive bacterium"/>
    <property type="evidence" value="ECO:0007669"/>
    <property type="project" value="TreeGrafter"/>
</dbReference>
<dbReference type="GO" id="GO:0005989">
    <property type="term" value="P:lactose biosynthetic process"/>
    <property type="evidence" value="ECO:0007669"/>
    <property type="project" value="UniProtKB-KW"/>
</dbReference>
<dbReference type="CDD" id="cd16898">
    <property type="entry name" value="LYZ_LA"/>
    <property type="match status" value="1"/>
</dbReference>
<dbReference type="FunFam" id="1.10.530.10:FF:000014">
    <property type="entry name" value="Alpha-lactalbumin"/>
    <property type="match status" value="1"/>
</dbReference>
<dbReference type="Gene3D" id="1.10.530.10">
    <property type="match status" value="1"/>
</dbReference>
<dbReference type="InterPro" id="IPR001916">
    <property type="entry name" value="Glyco_hydro_22"/>
</dbReference>
<dbReference type="InterPro" id="IPR019799">
    <property type="entry name" value="Glyco_hydro_22_CS"/>
</dbReference>
<dbReference type="InterPro" id="IPR000545">
    <property type="entry name" value="Lactalbumin"/>
</dbReference>
<dbReference type="InterPro" id="IPR023346">
    <property type="entry name" value="Lysozyme-like_dom_sf"/>
</dbReference>
<dbReference type="PANTHER" id="PTHR11407:SF32">
    <property type="entry name" value="ALPHA-LACTALBUMIN"/>
    <property type="match status" value="1"/>
</dbReference>
<dbReference type="PANTHER" id="PTHR11407">
    <property type="entry name" value="LYSOZYME C"/>
    <property type="match status" value="1"/>
</dbReference>
<dbReference type="Pfam" id="PF00062">
    <property type="entry name" value="Lys"/>
    <property type="match status" value="1"/>
</dbReference>
<dbReference type="PRINTS" id="PR00136">
    <property type="entry name" value="LACTALBUMIN"/>
</dbReference>
<dbReference type="PRINTS" id="PR00135">
    <property type="entry name" value="LYZLACT"/>
</dbReference>
<dbReference type="SMART" id="SM00263">
    <property type="entry name" value="LYZ1"/>
    <property type="match status" value="1"/>
</dbReference>
<dbReference type="SUPFAM" id="SSF53955">
    <property type="entry name" value="Lysozyme-like"/>
    <property type="match status" value="1"/>
</dbReference>
<dbReference type="PROSITE" id="PS00128">
    <property type="entry name" value="GLYCOSYL_HYDROL_F22_1"/>
    <property type="match status" value="1"/>
</dbReference>
<dbReference type="PROSITE" id="PS51348">
    <property type="entry name" value="GLYCOSYL_HYDROL_F22_2"/>
    <property type="match status" value="1"/>
</dbReference>
<name>LALBA_PAPCY</name>
<reference key="1">
    <citation type="journal article" date="1989" name="J. Mol. Biol.">
        <title>Refined structure of baboon alpha-lactalbumin at 1.7-A resolution. Comparison with C-type lysozyme.</title>
        <authorList>
            <person name="Acharya K.R."/>
            <person name="Stuart D.I."/>
            <person name="Walker N.P.C."/>
            <person name="Lewis M."/>
            <person name="Phillips D.C."/>
        </authorList>
    </citation>
    <scope>X-RAY CRYSTALLOGRAPHY (1.7 ANGSTROMS)</scope>
</reference>
<evidence type="ECO:0000250" key="1">
    <source>
        <dbReference type="UniProtKB" id="P00711"/>
    </source>
</evidence>
<evidence type="ECO:0000255" key="2"/>
<evidence type="ECO:0000255" key="3">
    <source>
        <dbReference type="PROSITE-ProRule" id="PRU00680"/>
    </source>
</evidence>
<evidence type="ECO:0000269" key="4">
    <source>
    </source>
</evidence>
<evidence type="ECO:0000305" key="5"/>
<evidence type="ECO:0007829" key="6">
    <source>
        <dbReference type="PDB" id="1ALC"/>
    </source>
</evidence>
<gene>
    <name type="primary">LALBA</name>
</gene>
<comment type="function">
    <text>Regulatory subunit of lactose synthase, changes the substrate specificity of galactosyltransferase in the mammary gland making glucose a good acceptor substrate for this enzyme. This enables LS to synthesize lactose, the major carbohydrate component of milk. In other tissues, galactosyltransferase transfers galactose onto the N-acetylglucosamine of the oligosaccharide chains in glycoproteins.</text>
</comment>
<comment type="subunit">
    <text>Lactose synthase (LS) is a heterodimer of a catalytic component, beta1,4-galactosyltransferase (beta4Gal-T1) and a regulatory component, alpha-lactalbumin (LA).</text>
</comment>
<comment type="subcellular location">
    <subcellularLocation>
        <location>Secreted</location>
    </subcellularLocation>
</comment>
<comment type="tissue specificity">
    <text>Mammary gland specific. Secreted in milk.</text>
</comment>
<comment type="similarity">
    <text evidence="3">Belongs to the glycosyl hydrolase 22 family.</text>
</comment>
<comment type="caution">
    <text evidence="5">This is a tentative sequence based on X-ray data.</text>
</comment>
<sequence length="123" mass="14174">KQFTKCELSQNLYDIDGYGRIALPELICTMFHTSGYDTQAIVENNESTEYGLFQISNALWCKSSQSPQSRNICDITCDKFLDDDITDDIMCAKKILDIKGIDYWIAHKALCTEKLEQWLCEKE</sequence>
<proteinExistence type="evidence at protein level"/>